<comment type="induction">
    <text evidence="1 2">Strongly induced at 16 degrees. Expression is repressed by YcgE. At 16 degrees Celsius with blue light irradiation, expression of this operon is absolutely dependent on YcgF for relief of YcgE repression. Part of the ycgZ-ymgA-ariR-ymgC operon.</text>
</comment>
<accession>P75994</accession>
<name>YMGC_ECOLI</name>
<proteinExistence type="evidence at transcript level"/>
<reference key="1">
    <citation type="journal article" date="1996" name="DNA Res.">
        <title>A 718-kb DNA sequence of the Escherichia coli K-12 genome corresponding to the 12.7-28.0 min region on the linkage map.</title>
        <authorList>
            <person name="Oshima T."/>
            <person name="Aiba H."/>
            <person name="Baba T."/>
            <person name="Fujita K."/>
            <person name="Hayashi K."/>
            <person name="Honjo A."/>
            <person name="Ikemoto K."/>
            <person name="Inada T."/>
            <person name="Itoh T."/>
            <person name="Kajihara M."/>
            <person name="Kanai K."/>
            <person name="Kashimoto K."/>
            <person name="Kimura S."/>
            <person name="Kitagawa M."/>
            <person name="Makino K."/>
            <person name="Masuda S."/>
            <person name="Miki T."/>
            <person name="Mizobuchi K."/>
            <person name="Mori H."/>
            <person name="Motomura K."/>
            <person name="Nakamura Y."/>
            <person name="Nashimoto H."/>
            <person name="Nishio Y."/>
            <person name="Saito N."/>
            <person name="Sampei G."/>
            <person name="Seki Y."/>
            <person name="Tagami H."/>
            <person name="Takemoto K."/>
            <person name="Wada C."/>
            <person name="Yamamoto Y."/>
            <person name="Yano M."/>
            <person name="Horiuchi T."/>
        </authorList>
    </citation>
    <scope>NUCLEOTIDE SEQUENCE [LARGE SCALE GENOMIC DNA]</scope>
    <source>
        <strain>K12 / W3110 / ATCC 27325 / DSM 5911</strain>
    </source>
</reference>
<reference key="2">
    <citation type="journal article" date="1997" name="Science">
        <title>The complete genome sequence of Escherichia coli K-12.</title>
        <authorList>
            <person name="Blattner F.R."/>
            <person name="Plunkett G. III"/>
            <person name="Bloch C.A."/>
            <person name="Perna N.T."/>
            <person name="Burland V."/>
            <person name="Riley M."/>
            <person name="Collado-Vides J."/>
            <person name="Glasner J.D."/>
            <person name="Rode C.K."/>
            <person name="Mayhew G.F."/>
            <person name="Gregor J."/>
            <person name="Davis N.W."/>
            <person name="Kirkpatrick H.A."/>
            <person name="Goeden M.A."/>
            <person name="Rose D.J."/>
            <person name="Mau B."/>
            <person name="Shao Y."/>
        </authorList>
    </citation>
    <scope>NUCLEOTIDE SEQUENCE [LARGE SCALE GENOMIC DNA]</scope>
    <source>
        <strain>K12 / MG1655 / ATCC 47076</strain>
    </source>
</reference>
<reference key="3">
    <citation type="journal article" date="2006" name="Mol. Syst. Biol.">
        <title>Highly accurate genome sequences of Escherichia coli K-12 strains MG1655 and W3110.</title>
        <authorList>
            <person name="Hayashi K."/>
            <person name="Morooka N."/>
            <person name="Yamamoto Y."/>
            <person name="Fujita K."/>
            <person name="Isono K."/>
            <person name="Choi S."/>
            <person name="Ohtsubo E."/>
            <person name="Baba T."/>
            <person name="Wanner B.L."/>
            <person name="Mori H."/>
            <person name="Horiuchi T."/>
        </authorList>
    </citation>
    <scope>NUCLEOTIDE SEQUENCE [LARGE SCALE GENOMIC DNA]</scope>
    <source>
        <strain>K12 / W3110 / ATCC 27325 / DSM 5911</strain>
    </source>
</reference>
<reference key="4">
    <citation type="journal article" date="2008" name="Microbiology">
        <title>Low temperature (23 degrees C) increases expression of biofilm-, cold-shock- and RpoS-dependent genes in Escherichia coli K-12.</title>
        <authorList>
            <person name="White-Ziegler C.A."/>
            <person name="Um S."/>
            <person name="Perez N.M."/>
            <person name="Berns A.L."/>
            <person name="Malhowski A.J."/>
            <person name="Young S."/>
        </authorList>
    </citation>
    <scope>INDUCTION BY LOW TEMPERATURE</scope>
    <source>
        <strain>K12 / MC4100</strain>
    </source>
</reference>
<reference key="5">
    <citation type="journal article" date="2009" name="Genes Dev.">
        <title>The BLUF-EAL protein YcgF acts as a direct anti-repressor in a blue-light response of Escherichia coli.</title>
        <authorList>
            <person name="Tschowri N."/>
            <person name="Busse S."/>
            <person name="Hengge R."/>
        </authorList>
    </citation>
    <scope>INDUCTION BY COLD</scope>
    <scope>REPRESSION BY YCGE</scope>
    <scope>OPERON STRUCTURE</scope>
    <source>
        <strain>K12 / MC4100</strain>
    </source>
</reference>
<evidence type="ECO:0000269" key="1">
    <source>
    </source>
</evidence>
<evidence type="ECO:0000269" key="2">
    <source>
    </source>
</evidence>
<sequence>MNNSIPERFIFQCALFKNLEREVFMTHGYVDSHIIDQALRLRLKDETSVILSDLYLQILQYIEMHKTTLTDIIINDRESVLS</sequence>
<gene>
    <name type="primary">ymgC</name>
    <name type="ordered locus">b1167</name>
    <name type="ordered locus">JW1154</name>
</gene>
<protein>
    <recommendedName>
        <fullName>Uncharacterized protein YmgC</fullName>
    </recommendedName>
</protein>
<keyword id="KW-1185">Reference proteome</keyword>
<dbReference type="EMBL" id="U00096">
    <property type="protein sequence ID" value="AAC74251.1"/>
    <property type="molecule type" value="Genomic_DNA"/>
</dbReference>
<dbReference type="EMBL" id="AP009048">
    <property type="protein sequence ID" value="BAA35999.1"/>
    <property type="molecule type" value="Genomic_DNA"/>
</dbReference>
<dbReference type="PIR" id="D64862">
    <property type="entry name" value="D64862"/>
</dbReference>
<dbReference type="RefSeq" id="NP_415685.1">
    <property type="nucleotide sequence ID" value="NC_000913.3"/>
</dbReference>
<dbReference type="RefSeq" id="WP_001065752.1">
    <property type="nucleotide sequence ID" value="NZ_SSZK01000010.1"/>
</dbReference>
<dbReference type="SMR" id="P75994"/>
<dbReference type="BioGRID" id="4261743">
    <property type="interactions" value="9"/>
</dbReference>
<dbReference type="FunCoup" id="P75994">
    <property type="interactions" value="266"/>
</dbReference>
<dbReference type="IntAct" id="P75994">
    <property type="interactions" value="5"/>
</dbReference>
<dbReference type="STRING" id="511145.b1167"/>
<dbReference type="PaxDb" id="511145-b1167"/>
<dbReference type="EnsemblBacteria" id="AAC74251">
    <property type="protein sequence ID" value="AAC74251"/>
    <property type="gene ID" value="b1167"/>
</dbReference>
<dbReference type="GeneID" id="75203730"/>
<dbReference type="GeneID" id="945090"/>
<dbReference type="KEGG" id="ecj:JW1154"/>
<dbReference type="KEGG" id="eco:b1167"/>
<dbReference type="KEGG" id="ecoc:C3026_06875"/>
<dbReference type="PATRIC" id="fig|511145.12.peg.1207"/>
<dbReference type="EchoBASE" id="EB4039"/>
<dbReference type="eggNOG" id="ENOG502ZRUM">
    <property type="taxonomic scope" value="Bacteria"/>
</dbReference>
<dbReference type="HOGENOM" id="CLU_182842_0_0_6"/>
<dbReference type="InParanoid" id="P75994"/>
<dbReference type="OMA" id="YIIDQAL"/>
<dbReference type="OrthoDB" id="6593561at2"/>
<dbReference type="BioCyc" id="EcoCyc:G6607-MONOMER"/>
<dbReference type="PRO" id="PR:P75994"/>
<dbReference type="Proteomes" id="UP000000625">
    <property type="component" value="Chromosome"/>
</dbReference>
<dbReference type="GO" id="GO:0044010">
    <property type="term" value="P:single-species biofilm formation"/>
    <property type="evidence" value="ECO:0000315"/>
    <property type="project" value="EcoCyc"/>
</dbReference>
<organism>
    <name type="scientific">Escherichia coli (strain K12)</name>
    <dbReference type="NCBI Taxonomy" id="83333"/>
    <lineage>
        <taxon>Bacteria</taxon>
        <taxon>Pseudomonadati</taxon>
        <taxon>Pseudomonadota</taxon>
        <taxon>Gammaproteobacteria</taxon>
        <taxon>Enterobacterales</taxon>
        <taxon>Enterobacteriaceae</taxon>
        <taxon>Escherichia</taxon>
    </lineage>
</organism>
<feature type="chain" id="PRO_0000168864" description="Uncharacterized protein YmgC">
    <location>
        <begin position="1"/>
        <end position="82"/>
    </location>
</feature>